<evidence type="ECO:0000255" key="1"/>
<evidence type="ECO:0000255" key="2">
    <source>
        <dbReference type="PROSITE-ProRule" id="PRU00806"/>
    </source>
</evidence>
<evidence type="ECO:0000305" key="3"/>
<gene>
    <name type="primary">CRRSP45</name>
    <name type="ordered locus">At4g20620</name>
    <name type="ORF">F9F13.270</name>
</gene>
<proteinExistence type="inferred from homology"/>
<reference key="1">
    <citation type="journal article" date="1999" name="Nature">
        <title>Sequence and analysis of chromosome 4 of the plant Arabidopsis thaliana.</title>
        <authorList>
            <person name="Mayer K.F.X."/>
            <person name="Schueller C."/>
            <person name="Wambutt R."/>
            <person name="Murphy G."/>
            <person name="Volckaert G."/>
            <person name="Pohl T."/>
            <person name="Duesterhoeft A."/>
            <person name="Stiekema W."/>
            <person name="Entian K.-D."/>
            <person name="Terryn N."/>
            <person name="Harris B."/>
            <person name="Ansorge W."/>
            <person name="Brandt P."/>
            <person name="Grivell L.A."/>
            <person name="Rieger M."/>
            <person name="Weichselgartner M."/>
            <person name="de Simone V."/>
            <person name="Obermaier B."/>
            <person name="Mache R."/>
            <person name="Mueller M."/>
            <person name="Kreis M."/>
            <person name="Delseny M."/>
            <person name="Puigdomenech P."/>
            <person name="Watson M."/>
            <person name="Schmidtheini T."/>
            <person name="Reichert B."/>
            <person name="Portetelle D."/>
            <person name="Perez-Alonso M."/>
            <person name="Boutry M."/>
            <person name="Bancroft I."/>
            <person name="Vos P."/>
            <person name="Hoheisel J."/>
            <person name="Zimmermann W."/>
            <person name="Wedler H."/>
            <person name="Ridley P."/>
            <person name="Langham S.-A."/>
            <person name="McCullagh B."/>
            <person name="Bilham L."/>
            <person name="Robben J."/>
            <person name="van der Schueren J."/>
            <person name="Grymonprez B."/>
            <person name="Chuang Y.-J."/>
            <person name="Vandenbussche F."/>
            <person name="Braeken M."/>
            <person name="Weltjens I."/>
            <person name="Voet M."/>
            <person name="Bastiaens I."/>
            <person name="Aert R."/>
            <person name="Defoor E."/>
            <person name="Weitzenegger T."/>
            <person name="Bothe G."/>
            <person name="Ramsperger U."/>
            <person name="Hilbert H."/>
            <person name="Braun M."/>
            <person name="Holzer E."/>
            <person name="Brandt A."/>
            <person name="Peters S."/>
            <person name="van Staveren M."/>
            <person name="Dirkse W."/>
            <person name="Mooijman P."/>
            <person name="Klein Lankhorst R."/>
            <person name="Rose M."/>
            <person name="Hauf J."/>
            <person name="Koetter P."/>
            <person name="Berneiser S."/>
            <person name="Hempel S."/>
            <person name="Feldpausch M."/>
            <person name="Lamberth S."/>
            <person name="Van den Daele H."/>
            <person name="De Keyser A."/>
            <person name="Buysshaert C."/>
            <person name="Gielen J."/>
            <person name="Villarroel R."/>
            <person name="De Clercq R."/>
            <person name="van Montagu M."/>
            <person name="Rogers J."/>
            <person name="Cronin A."/>
            <person name="Quail M.A."/>
            <person name="Bray-Allen S."/>
            <person name="Clark L."/>
            <person name="Doggett J."/>
            <person name="Hall S."/>
            <person name="Kay M."/>
            <person name="Lennard N."/>
            <person name="McLay K."/>
            <person name="Mayes R."/>
            <person name="Pettett A."/>
            <person name="Rajandream M.A."/>
            <person name="Lyne M."/>
            <person name="Benes V."/>
            <person name="Rechmann S."/>
            <person name="Borkova D."/>
            <person name="Bloecker H."/>
            <person name="Scharfe M."/>
            <person name="Grimm M."/>
            <person name="Loehnert T.-H."/>
            <person name="Dose S."/>
            <person name="de Haan M."/>
            <person name="Maarse A.C."/>
            <person name="Schaefer M."/>
            <person name="Mueller-Auer S."/>
            <person name="Gabel C."/>
            <person name="Fuchs M."/>
            <person name="Fartmann B."/>
            <person name="Granderath K."/>
            <person name="Dauner D."/>
            <person name="Herzl A."/>
            <person name="Neumann S."/>
            <person name="Argiriou A."/>
            <person name="Vitale D."/>
            <person name="Liguori R."/>
            <person name="Piravandi E."/>
            <person name="Massenet O."/>
            <person name="Quigley F."/>
            <person name="Clabauld G."/>
            <person name="Muendlein A."/>
            <person name="Felber R."/>
            <person name="Schnabl S."/>
            <person name="Hiller R."/>
            <person name="Schmidt W."/>
            <person name="Lecharny A."/>
            <person name="Aubourg S."/>
            <person name="Chefdor F."/>
            <person name="Cooke R."/>
            <person name="Berger C."/>
            <person name="Monfort A."/>
            <person name="Casacuberta E."/>
            <person name="Gibbons T."/>
            <person name="Weber N."/>
            <person name="Vandenbol M."/>
            <person name="Bargues M."/>
            <person name="Terol J."/>
            <person name="Torres A."/>
            <person name="Perez-Perez A."/>
            <person name="Purnelle B."/>
            <person name="Bent E."/>
            <person name="Johnson S."/>
            <person name="Tacon D."/>
            <person name="Jesse T."/>
            <person name="Heijnen L."/>
            <person name="Schwarz S."/>
            <person name="Scholler P."/>
            <person name="Heber S."/>
            <person name="Francs P."/>
            <person name="Bielke C."/>
            <person name="Frishman D."/>
            <person name="Haase D."/>
            <person name="Lemcke K."/>
            <person name="Mewes H.-W."/>
            <person name="Stocker S."/>
            <person name="Zaccaria P."/>
            <person name="Bevan M."/>
            <person name="Wilson R.K."/>
            <person name="de la Bastide M."/>
            <person name="Habermann K."/>
            <person name="Parnell L."/>
            <person name="Dedhia N."/>
            <person name="Gnoj L."/>
            <person name="Schutz K."/>
            <person name="Huang E."/>
            <person name="Spiegel L."/>
            <person name="Sekhon M."/>
            <person name="Murray J."/>
            <person name="Sheet P."/>
            <person name="Cordes M."/>
            <person name="Abu-Threideh J."/>
            <person name="Stoneking T."/>
            <person name="Kalicki J."/>
            <person name="Graves T."/>
            <person name="Harmon G."/>
            <person name="Edwards J."/>
            <person name="Latreille P."/>
            <person name="Courtney L."/>
            <person name="Cloud J."/>
            <person name="Abbott A."/>
            <person name="Scott K."/>
            <person name="Johnson D."/>
            <person name="Minx P."/>
            <person name="Bentley D."/>
            <person name="Fulton B."/>
            <person name="Miller N."/>
            <person name="Greco T."/>
            <person name="Kemp K."/>
            <person name="Kramer J."/>
            <person name="Fulton L."/>
            <person name="Mardis E."/>
            <person name="Dante M."/>
            <person name="Pepin K."/>
            <person name="Hillier L.W."/>
            <person name="Nelson J."/>
            <person name="Spieth J."/>
            <person name="Ryan E."/>
            <person name="Andrews S."/>
            <person name="Geisel C."/>
            <person name="Layman D."/>
            <person name="Du H."/>
            <person name="Ali J."/>
            <person name="Berghoff A."/>
            <person name="Jones K."/>
            <person name="Drone K."/>
            <person name="Cotton M."/>
            <person name="Joshu C."/>
            <person name="Antonoiu B."/>
            <person name="Zidanic M."/>
            <person name="Strong C."/>
            <person name="Sun H."/>
            <person name="Lamar B."/>
            <person name="Yordan C."/>
            <person name="Ma P."/>
            <person name="Zhong J."/>
            <person name="Preston R."/>
            <person name="Vil D."/>
            <person name="Shekher M."/>
            <person name="Matero A."/>
            <person name="Shah R."/>
            <person name="Swaby I.K."/>
            <person name="O'Shaughnessy A."/>
            <person name="Rodriguez M."/>
            <person name="Hoffman J."/>
            <person name="Till S."/>
            <person name="Granat S."/>
            <person name="Shohdy N."/>
            <person name="Hasegawa A."/>
            <person name="Hameed A."/>
            <person name="Lodhi M."/>
            <person name="Johnson A."/>
            <person name="Chen E."/>
            <person name="Marra M.A."/>
            <person name="Martienssen R."/>
            <person name="McCombie W.R."/>
        </authorList>
    </citation>
    <scope>NUCLEOTIDE SEQUENCE [LARGE SCALE GENOMIC DNA]</scope>
    <source>
        <strain>cv. Columbia</strain>
    </source>
</reference>
<reference key="2">
    <citation type="journal article" date="2017" name="Plant J.">
        <title>Araport11: a complete reannotation of the Arabidopsis thaliana reference genome.</title>
        <authorList>
            <person name="Cheng C.Y."/>
            <person name="Krishnakumar V."/>
            <person name="Chan A.P."/>
            <person name="Thibaud-Nissen F."/>
            <person name="Schobel S."/>
            <person name="Town C.D."/>
        </authorList>
    </citation>
    <scope>GENOME REANNOTATION</scope>
    <source>
        <strain>cv. Columbia</strain>
    </source>
</reference>
<reference key="3">
    <citation type="journal article" date="2001" name="Plant Physiol.">
        <title>A superfamily of proteins with novel cysteine-rich repeats.</title>
        <authorList>
            <person name="Chen Z."/>
        </authorList>
    </citation>
    <scope>GENE FAMILY ORGANIZATION</scope>
    <scope>NOMENCLATURE</scope>
</reference>
<protein>
    <recommendedName>
        <fullName>Cysteine-rich repeat secretory protein 45</fullName>
    </recommendedName>
</protein>
<accession>P0CJ52</accession>
<accession>F4JVK9</accession>
<accession>Q680R8</accession>
<accession>Q9S7J6</accession>
<accession>Q9SUM6</accession>
<keyword id="KW-1185">Reference proteome</keyword>
<keyword id="KW-0677">Repeat</keyword>
<keyword id="KW-0964">Secreted</keyword>
<keyword id="KW-0732">Signal</keyword>
<organism>
    <name type="scientific">Arabidopsis thaliana</name>
    <name type="common">Mouse-ear cress</name>
    <dbReference type="NCBI Taxonomy" id="3702"/>
    <lineage>
        <taxon>Eukaryota</taxon>
        <taxon>Viridiplantae</taxon>
        <taxon>Streptophyta</taxon>
        <taxon>Embryophyta</taxon>
        <taxon>Tracheophyta</taxon>
        <taxon>Spermatophyta</taxon>
        <taxon>Magnoliopsida</taxon>
        <taxon>eudicotyledons</taxon>
        <taxon>Gunneridae</taxon>
        <taxon>Pentapetalae</taxon>
        <taxon>rosids</taxon>
        <taxon>malvids</taxon>
        <taxon>Brassicales</taxon>
        <taxon>Brassicaceae</taxon>
        <taxon>Camelineae</taxon>
        <taxon>Arabidopsis</taxon>
    </lineage>
</organism>
<dbReference type="EMBL" id="AL080253">
    <property type="protein sequence ID" value="CAB45828.1"/>
    <property type="status" value="ALT_SEQ"/>
    <property type="molecule type" value="Genomic_DNA"/>
</dbReference>
<dbReference type="EMBL" id="AL161553">
    <property type="protein sequence ID" value="CAB79062.1"/>
    <property type="status" value="ALT_SEQ"/>
    <property type="molecule type" value="Genomic_DNA"/>
</dbReference>
<dbReference type="EMBL" id="CP002687">
    <property type="protein sequence ID" value="AEE84348.2"/>
    <property type="molecule type" value="Genomic_DNA"/>
</dbReference>
<dbReference type="PIR" id="T10595">
    <property type="entry name" value="T10595"/>
</dbReference>
<dbReference type="RefSeq" id="NP_001320013.1">
    <property type="nucleotide sequence ID" value="NM_001341449.1"/>
</dbReference>
<dbReference type="RefSeq" id="NP_567608.3">
    <property type="nucleotide sequence ID" value="NM_118177.3"/>
</dbReference>
<dbReference type="RefSeq" id="NP_567609.3">
    <property type="nucleotide sequence ID" value="NM_118178.3"/>
</dbReference>
<dbReference type="RefSeq" id="NP_567610.3">
    <property type="nucleotide sequence ID" value="NM_118179.3"/>
</dbReference>
<dbReference type="RefSeq" id="NP_567611.3">
    <property type="nucleotide sequence ID" value="NM_118180.3"/>
</dbReference>
<dbReference type="RefSeq" id="NP_567612.3">
    <property type="nucleotide sequence ID" value="NM_118181.3"/>
</dbReference>
<dbReference type="RefSeq" id="NP_567614.3">
    <property type="nucleotide sequence ID" value="NM_118183.3"/>
</dbReference>
<dbReference type="SMR" id="P0CJ52"/>
<dbReference type="EnsemblPlants" id="AT4G20580.1">
    <property type="protein sequence ID" value="AT4G20580.1"/>
    <property type="gene ID" value="AT4G20580"/>
</dbReference>
<dbReference type="EnsemblPlants" id="AT4G20590.1">
    <property type="protein sequence ID" value="AT4G20590.1"/>
    <property type="gene ID" value="AT4G20590"/>
</dbReference>
<dbReference type="EnsemblPlants" id="AT4G20600.1">
    <property type="protein sequence ID" value="AT4G20600.1"/>
    <property type="gene ID" value="AT4G20600"/>
</dbReference>
<dbReference type="EnsemblPlants" id="AT4G20610.1">
    <property type="protein sequence ID" value="AT4G20610.1"/>
    <property type="gene ID" value="AT4G20610"/>
</dbReference>
<dbReference type="EnsemblPlants" id="AT4G20620.1">
    <property type="protein sequence ID" value="AT4G20620.1"/>
    <property type="gene ID" value="AT4G20620"/>
</dbReference>
<dbReference type="EnsemblPlants" id="AT4G20630.1">
    <property type="protein sequence ID" value="AT4G20630.1"/>
    <property type="gene ID" value="AT4G20630"/>
</dbReference>
<dbReference type="EnsemblPlants" id="AT4G20640.1">
    <property type="protein sequence ID" value="AT4G20640.1"/>
    <property type="gene ID" value="AT4G20640"/>
</dbReference>
<dbReference type="GeneID" id="827810"/>
<dbReference type="Gramene" id="AT4G20580.1">
    <property type="protein sequence ID" value="AT4G20580.1"/>
    <property type="gene ID" value="AT4G20580"/>
</dbReference>
<dbReference type="Gramene" id="AT4G20590.1">
    <property type="protein sequence ID" value="AT4G20590.1"/>
    <property type="gene ID" value="AT4G20590"/>
</dbReference>
<dbReference type="Gramene" id="AT4G20600.1">
    <property type="protein sequence ID" value="AT4G20600.1"/>
    <property type="gene ID" value="AT4G20600"/>
</dbReference>
<dbReference type="Gramene" id="AT4G20610.1">
    <property type="protein sequence ID" value="AT4G20610.1"/>
    <property type="gene ID" value="AT4G20610"/>
</dbReference>
<dbReference type="Gramene" id="AT4G20620.1">
    <property type="protein sequence ID" value="AT4G20620.1"/>
    <property type="gene ID" value="AT4G20620"/>
</dbReference>
<dbReference type="Gramene" id="AT4G20630.1">
    <property type="protein sequence ID" value="AT4G20630.1"/>
    <property type="gene ID" value="AT4G20630"/>
</dbReference>
<dbReference type="Gramene" id="AT4G20640.1">
    <property type="protein sequence ID" value="AT4G20640.1"/>
    <property type="gene ID" value="AT4G20640"/>
</dbReference>
<dbReference type="KEGG" id="ath:AT4G20580"/>
<dbReference type="KEGG" id="ath:AT4G20590"/>
<dbReference type="KEGG" id="ath:AT4G20600"/>
<dbReference type="KEGG" id="ath:AT4G20610"/>
<dbReference type="KEGG" id="ath:AT4G20620"/>
<dbReference type="KEGG" id="ath:AT4G20630"/>
<dbReference type="KEGG" id="ath:AT4G20640"/>
<dbReference type="Araport" id="AT4G20620"/>
<dbReference type="TAIR" id="AT4G20620"/>
<dbReference type="HOGENOM" id="CLU_000288_35_0_1"/>
<dbReference type="InParanoid" id="P0CJ52"/>
<dbReference type="OMA" id="FIQVWNI"/>
<dbReference type="PRO" id="PR:P0CJ52"/>
<dbReference type="Proteomes" id="UP000006548">
    <property type="component" value="Chromosome 4"/>
</dbReference>
<dbReference type="ExpressionAtlas" id="P0CJ52">
    <property type="expression patterns" value="baseline"/>
</dbReference>
<dbReference type="GO" id="GO:0005576">
    <property type="term" value="C:extracellular region"/>
    <property type="evidence" value="ECO:0007669"/>
    <property type="project" value="UniProtKB-SubCell"/>
</dbReference>
<dbReference type="CDD" id="cd23509">
    <property type="entry name" value="Gnk2-like"/>
    <property type="match status" value="2"/>
</dbReference>
<dbReference type="FunFam" id="3.30.430.20:FF:000002">
    <property type="entry name" value="Cysteine-rich receptor-like protein kinase 10"/>
    <property type="match status" value="1"/>
</dbReference>
<dbReference type="Gene3D" id="3.30.430.20">
    <property type="entry name" value="Gnk2 domain, C-X8-C-X2-C motif"/>
    <property type="match status" value="2"/>
</dbReference>
<dbReference type="InterPro" id="IPR050581">
    <property type="entry name" value="CRR_secretory_protein"/>
</dbReference>
<dbReference type="InterPro" id="IPR002902">
    <property type="entry name" value="GNK2"/>
</dbReference>
<dbReference type="InterPro" id="IPR038408">
    <property type="entry name" value="GNK2_sf"/>
</dbReference>
<dbReference type="PANTHER" id="PTHR32411:SF54">
    <property type="entry name" value="CYSTEINE-RICH REPEAT SECRETORY PROTEIN 29-RELATED"/>
    <property type="match status" value="1"/>
</dbReference>
<dbReference type="PANTHER" id="PTHR32411">
    <property type="entry name" value="CYSTEINE-RICH REPEAT SECRETORY PROTEIN 38-RELATED"/>
    <property type="match status" value="1"/>
</dbReference>
<dbReference type="Pfam" id="PF01657">
    <property type="entry name" value="Stress-antifung"/>
    <property type="match status" value="2"/>
</dbReference>
<dbReference type="PROSITE" id="PS51473">
    <property type="entry name" value="GNK2"/>
    <property type="match status" value="2"/>
</dbReference>
<comment type="subcellular location">
    <subcellularLocation>
        <location evidence="3">Secreted</location>
    </subcellularLocation>
</comment>
<comment type="similarity">
    <text evidence="3">Belongs to the cysteine-rich repeat secretory protein family.</text>
</comment>
<comment type="sequence caution" evidence="3">
    <conflict type="erroneous gene model prediction">
        <sequence resource="EMBL-CDS" id="CAB45828"/>
    </conflict>
</comment>
<comment type="sequence caution" evidence="3">
    <conflict type="erroneous gene model prediction">
        <sequence resource="EMBL-CDS" id="CAB79062"/>
    </conflict>
</comment>
<name>CRR45_ARATH</name>
<sequence length="256" mass="29018">MSSVFGSVHILAMIAIQLLLTHSVSSLNLTNAYLHHKCSNTQGKYKQGSAFEKNLNLVLSTITSIGNFRDGFRYTEEGEDPNNVFVMFQCRGDSYWSKCPPCISTAVSGLRRRCPRNKGAIIWYDQCLLKISSVASFNKIDYENDFYLSNPNNMSDRGLFNKETSALLEKLAYKASDRNNLDGKQLVLYAAGEKRIGTKKVYAMVQCTKDLIFTKCFECLEGILRKFPQCCDGKRGGRVFGTSCNFRYELYPFLRN</sequence>
<feature type="signal peptide" evidence="1">
    <location>
        <begin position="1"/>
        <end position="26"/>
    </location>
</feature>
<feature type="chain" id="PRO_0000403941" description="Cysteine-rich repeat secretory protein 45">
    <location>
        <begin position="27"/>
        <end position="256"/>
    </location>
</feature>
<feature type="domain" description="Gnk2-homologous 1" evidence="2">
    <location>
        <begin position="33"/>
        <end position="136"/>
    </location>
</feature>
<feature type="domain" description="Gnk2-homologous 2" evidence="2">
    <location>
        <begin position="142"/>
        <end position="253"/>
    </location>
</feature>